<accession>Q97EC3</accession>
<sequence length="340" mass="38809">MKNWLNSDLKDNDIVITTRIRLARNIKGIPFPDKLSDDEGRDVVKKIKDTLIVSNDGKENFTCIDLWKNDNNCNAEYLEKHLISKKLIENYNRSAFILNKDETISVMVNEEDHLRLQAITAGLNLEEAYECIDRIDDKIEENLDYAFDEKIGYLTACPTNIGTGMRASVMIHLPALSMNNEMPRILNALSQIGITIRGLWGEGSKAIGSLYQISNQITLGMSENDIISNLKTVVEQIINQENLSREQLMKKYKYELEDKIARSLGILKNSVILDSNECLNLISNVRMGVEIGIINDISKKSLNNLLVNTQRATLQEIYNKELSKKEENIKRALYVRENLR</sequence>
<protein>
    <recommendedName>
        <fullName evidence="1">Protein-arginine kinase</fullName>
        <ecNumber evidence="1">2.7.14.1</ecNumber>
    </recommendedName>
</protein>
<evidence type="ECO:0000255" key="1">
    <source>
        <dbReference type="HAMAP-Rule" id="MF_00602"/>
    </source>
</evidence>
<reference key="1">
    <citation type="journal article" date="2001" name="J. Bacteriol.">
        <title>Genome sequence and comparative analysis of the solvent-producing bacterium Clostridium acetobutylicum.</title>
        <authorList>
            <person name="Noelling J."/>
            <person name="Breton G."/>
            <person name="Omelchenko M.V."/>
            <person name="Makarova K.S."/>
            <person name="Zeng Q."/>
            <person name="Gibson R."/>
            <person name="Lee H.M."/>
            <person name="Dubois J."/>
            <person name="Qiu D."/>
            <person name="Hitti J."/>
            <person name="Wolf Y.I."/>
            <person name="Tatusov R.L."/>
            <person name="Sabathe F."/>
            <person name="Doucette-Stamm L.A."/>
            <person name="Soucaille P."/>
            <person name="Daly M.J."/>
            <person name="Bennett G.N."/>
            <person name="Koonin E.V."/>
            <person name="Smith D.R."/>
        </authorList>
    </citation>
    <scope>NUCLEOTIDE SEQUENCE [LARGE SCALE GENOMIC DNA]</scope>
    <source>
        <strain>ATCC 824 / DSM 792 / JCM 1419 / IAM 19013 / LMG 5710 / NBRC 13948 / NRRL B-527 / VKM B-1787 / 2291 / W</strain>
    </source>
</reference>
<organism>
    <name type="scientific">Clostridium acetobutylicum (strain ATCC 824 / DSM 792 / JCM 1419 / IAM 19013 / LMG 5710 / NBRC 13948 / NRRL B-527 / VKM B-1787 / 2291 / W)</name>
    <dbReference type="NCBI Taxonomy" id="272562"/>
    <lineage>
        <taxon>Bacteria</taxon>
        <taxon>Bacillati</taxon>
        <taxon>Bacillota</taxon>
        <taxon>Clostridia</taxon>
        <taxon>Eubacteriales</taxon>
        <taxon>Clostridiaceae</taxon>
        <taxon>Clostridium</taxon>
    </lineage>
</organism>
<keyword id="KW-0067">ATP-binding</keyword>
<keyword id="KW-0418">Kinase</keyword>
<keyword id="KW-0547">Nucleotide-binding</keyword>
<keyword id="KW-1185">Reference proteome</keyword>
<keyword id="KW-0808">Transferase</keyword>
<dbReference type="EC" id="2.7.14.1" evidence="1"/>
<dbReference type="EMBL" id="AE001437">
    <property type="protein sequence ID" value="AAK81127.1"/>
    <property type="molecule type" value="Genomic_DNA"/>
</dbReference>
<dbReference type="PIR" id="D97292">
    <property type="entry name" value="D97292"/>
</dbReference>
<dbReference type="RefSeq" id="NP_349787.1">
    <property type="nucleotide sequence ID" value="NC_003030.1"/>
</dbReference>
<dbReference type="RefSeq" id="WP_010966467.1">
    <property type="nucleotide sequence ID" value="NC_003030.1"/>
</dbReference>
<dbReference type="SMR" id="Q97EC3"/>
<dbReference type="STRING" id="272562.CA_C3190"/>
<dbReference type="KEGG" id="cac:CA_C3190"/>
<dbReference type="PATRIC" id="fig|272562.8.peg.3370"/>
<dbReference type="eggNOG" id="COG3869">
    <property type="taxonomic scope" value="Bacteria"/>
</dbReference>
<dbReference type="HOGENOM" id="CLU_066591_1_0_9"/>
<dbReference type="OrthoDB" id="9791353at2"/>
<dbReference type="Proteomes" id="UP000000814">
    <property type="component" value="Chromosome"/>
</dbReference>
<dbReference type="GO" id="GO:0005615">
    <property type="term" value="C:extracellular space"/>
    <property type="evidence" value="ECO:0007669"/>
    <property type="project" value="TreeGrafter"/>
</dbReference>
<dbReference type="GO" id="GO:0005524">
    <property type="term" value="F:ATP binding"/>
    <property type="evidence" value="ECO:0007669"/>
    <property type="project" value="UniProtKB-KW"/>
</dbReference>
<dbReference type="GO" id="GO:0004111">
    <property type="term" value="F:creatine kinase activity"/>
    <property type="evidence" value="ECO:0007669"/>
    <property type="project" value="InterPro"/>
</dbReference>
<dbReference type="GO" id="GO:0004672">
    <property type="term" value="F:protein kinase activity"/>
    <property type="evidence" value="ECO:0007669"/>
    <property type="project" value="UniProtKB-UniRule"/>
</dbReference>
<dbReference type="GO" id="GO:0046314">
    <property type="term" value="P:phosphocreatine biosynthetic process"/>
    <property type="evidence" value="ECO:0007669"/>
    <property type="project" value="InterPro"/>
</dbReference>
<dbReference type="CDD" id="cd07930">
    <property type="entry name" value="bacterial_phosphagen_kinase"/>
    <property type="match status" value="1"/>
</dbReference>
<dbReference type="Gene3D" id="3.30.590.10">
    <property type="entry name" value="Glutamine synthetase/guanido kinase, catalytic domain"/>
    <property type="match status" value="1"/>
</dbReference>
<dbReference type="HAMAP" id="MF_00602">
    <property type="entry name" value="Prot_Arg_kinase"/>
    <property type="match status" value="1"/>
</dbReference>
<dbReference type="InterPro" id="IPR023660">
    <property type="entry name" value="Arg_Kinase"/>
</dbReference>
<dbReference type="InterPro" id="IPR000749">
    <property type="entry name" value="ATP-guanido_PTrfase"/>
</dbReference>
<dbReference type="InterPro" id="IPR022415">
    <property type="entry name" value="ATP-guanido_PTrfase_AS"/>
</dbReference>
<dbReference type="InterPro" id="IPR022414">
    <property type="entry name" value="ATP-guanido_PTrfase_cat"/>
</dbReference>
<dbReference type="InterPro" id="IPR014746">
    <property type="entry name" value="Gln_synth/guanido_kin_cat_dom"/>
</dbReference>
<dbReference type="NCBIfam" id="NF002194">
    <property type="entry name" value="PRK01059.1-4"/>
    <property type="match status" value="1"/>
</dbReference>
<dbReference type="PANTHER" id="PTHR11547:SF38">
    <property type="entry name" value="ARGININE KINASE 1-RELATED"/>
    <property type="match status" value="1"/>
</dbReference>
<dbReference type="PANTHER" id="PTHR11547">
    <property type="entry name" value="ARGININE OR CREATINE KINASE"/>
    <property type="match status" value="1"/>
</dbReference>
<dbReference type="Pfam" id="PF00217">
    <property type="entry name" value="ATP-gua_Ptrans"/>
    <property type="match status" value="1"/>
</dbReference>
<dbReference type="SUPFAM" id="SSF55931">
    <property type="entry name" value="Glutamine synthetase/guanido kinase"/>
    <property type="match status" value="1"/>
</dbReference>
<dbReference type="PROSITE" id="PS00112">
    <property type="entry name" value="PHOSPHAGEN_KINASE"/>
    <property type="match status" value="1"/>
</dbReference>
<dbReference type="PROSITE" id="PS51510">
    <property type="entry name" value="PHOSPHAGEN_KINASE_C"/>
    <property type="match status" value="1"/>
</dbReference>
<proteinExistence type="inferred from homology"/>
<gene>
    <name evidence="1" type="primary">mcsB</name>
    <name type="ordered locus">CA_C3190</name>
</gene>
<name>MCSB_CLOAB</name>
<feature type="chain" id="PRO_0000212021" description="Protein-arginine kinase">
    <location>
        <begin position="1"/>
        <end position="340"/>
    </location>
</feature>
<feature type="domain" description="Phosphagen kinase C-terminal" evidence="1">
    <location>
        <begin position="14"/>
        <end position="244"/>
    </location>
</feature>
<feature type="binding site" evidence="1">
    <location>
        <begin position="17"/>
        <end position="21"/>
    </location>
    <ligand>
        <name>ATP</name>
        <dbReference type="ChEBI" id="CHEBI:30616"/>
    </ligand>
</feature>
<feature type="binding site" evidence="1">
    <location>
        <position position="81"/>
    </location>
    <ligand>
        <name>ATP</name>
        <dbReference type="ChEBI" id="CHEBI:30616"/>
    </ligand>
</feature>
<feature type="binding site" evidence="1">
    <location>
        <position position="115"/>
    </location>
    <ligand>
        <name>ATP</name>
        <dbReference type="ChEBI" id="CHEBI:30616"/>
    </ligand>
</feature>
<feature type="binding site" evidence="1">
    <location>
        <begin position="166"/>
        <end position="170"/>
    </location>
    <ligand>
        <name>ATP</name>
        <dbReference type="ChEBI" id="CHEBI:30616"/>
    </ligand>
</feature>
<feature type="binding site" evidence="1">
    <location>
        <begin position="197"/>
        <end position="202"/>
    </location>
    <ligand>
        <name>ATP</name>
        <dbReference type="ChEBI" id="CHEBI:30616"/>
    </ligand>
</feature>
<comment type="function">
    <text evidence="1">Catalyzes the specific phosphorylation of arginine residues in proteins.</text>
</comment>
<comment type="catalytic activity">
    <reaction evidence="1">
        <text>L-arginyl-[protein] + ATP = N(omega)-phospho-L-arginyl-[protein] + ADP + H(+)</text>
        <dbReference type="Rhea" id="RHEA:43384"/>
        <dbReference type="Rhea" id="RHEA-COMP:10532"/>
        <dbReference type="Rhea" id="RHEA-COMP:10533"/>
        <dbReference type="ChEBI" id="CHEBI:15378"/>
        <dbReference type="ChEBI" id="CHEBI:29965"/>
        <dbReference type="ChEBI" id="CHEBI:30616"/>
        <dbReference type="ChEBI" id="CHEBI:83226"/>
        <dbReference type="ChEBI" id="CHEBI:456216"/>
        <dbReference type="EC" id="2.7.14.1"/>
    </reaction>
</comment>
<comment type="similarity">
    <text evidence="1">Belongs to the ATP:guanido phosphotransferase family.</text>
</comment>